<proteinExistence type="inferred from homology"/>
<protein>
    <recommendedName>
        <fullName evidence="1">Large ribosomal subunit protein uL2</fullName>
    </recommendedName>
    <alternativeName>
        <fullName evidence="3">50S ribosomal protein L2</fullName>
    </alternativeName>
</protein>
<accession>B0BST4</accession>
<gene>
    <name evidence="1" type="primary">rplB</name>
    <name type="ordered locus">APJL_1798</name>
</gene>
<comment type="function">
    <text evidence="1">One of the primary rRNA binding proteins. Required for association of the 30S and 50S subunits to form the 70S ribosome, for tRNA binding and peptide bond formation. It has been suggested to have peptidyltransferase activity; this is somewhat controversial. Makes several contacts with the 16S rRNA in the 70S ribosome.</text>
</comment>
<comment type="subunit">
    <text evidence="1">Part of the 50S ribosomal subunit. Forms a bridge to the 30S subunit in the 70S ribosome.</text>
</comment>
<comment type="similarity">
    <text evidence="1">Belongs to the universal ribosomal protein uL2 family.</text>
</comment>
<feature type="chain" id="PRO_1000141496" description="Large ribosomal subunit protein uL2">
    <location>
        <begin position="1"/>
        <end position="273"/>
    </location>
</feature>
<feature type="region of interest" description="Disordered" evidence="2">
    <location>
        <begin position="31"/>
        <end position="50"/>
    </location>
</feature>
<feature type="region of interest" description="Disordered" evidence="2">
    <location>
        <begin position="221"/>
        <end position="273"/>
    </location>
</feature>
<feature type="compositionally biased region" description="Basic residues" evidence="2">
    <location>
        <begin position="253"/>
        <end position="273"/>
    </location>
</feature>
<name>RL2_ACTPJ</name>
<organism>
    <name type="scientific">Actinobacillus pleuropneumoniae serotype 3 (strain JL03)</name>
    <dbReference type="NCBI Taxonomy" id="434271"/>
    <lineage>
        <taxon>Bacteria</taxon>
        <taxon>Pseudomonadati</taxon>
        <taxon>Pseudomonadota</taxon>
        <taxon>Gammaproteobacteria</taxon>
        <taxon>Pasteurellales</taxon>
        <taxon>Pasteurellaceae</taxon>
        <taxon>Actinobacillus</taxon>
    </lineage>
</organism>
<evidence type="ECO:0000255" key="1">
    <source>
        <dbReference type="HAMAP-Rule" id="MF_01320"/>
    </source>
</evidence>
<evidence type="ECO:0000256" key="2">
    <source>
        <dbReference type="SAM" id="MobiDB-lite"/>
    </source>
</evidence>
<evidence type="ECO:0000305" key="3"/>
<sequence>MAIVKCKPTSAGRRHVVKVVNAELHKGKPYAPLLDSKSKTGGRNNLGRITTRHIGGGHKQHYRLVDFKRNKLDIPAVVERLEYDPNRSANIALVLYKDGERRYILAPKGLSVGDTIQAGVSAPIKAGNALPMRNIPVGTTVHNVELKPGKGGQIARSAGAYVQIIAREGNYVTLRLRSGEMRKVLAECTATIGEVGNSEHMLRVLGKAGANRWRGVRPTVRGTAMNPVDHPHGGGEGRNFGKHPVTPWGVQTKGKKTRHNKRTDKYIVRRRGK</sequence>
<keyword id="KW-0687">Ribonucleoprotein</keyword>
<keyword id="KW-0689">Ribosomal protein</keyword>
<keyword id="KW-0694">RNA-binding</keyword>
<keyword id="KW-0699">rRNA-binding</keyword>
<dbReference type="EMBL" id="CP000687">
    <property type="protein sequence ID" value="ABY70348.1"/>
    <property type="molecule type" value="Genomic_DNA"/>
</dbReference>
<dbReference type="RefSeq" id="WP_005599291.1">
    <property type="nucleotide sequence ID" value="NC_010278.1"/>
</dbReference>
<dbReference type="SMR" id="B0BST4"/>
<dbReference type="GeneID" id="48600055"/>
<dbReference type="KEGG" id="apj:APJL_1798"/>
<dbReference type="HOGENOM" id="CLU_036235_2_1_6"/>
<dbReference type="Proteomes" id="UP000008547">
    <property type="component" value="Chromosome"/>
</dbReference>
<dbReference type="GO" id="GO:0015934">
    <property type="term" value="C:large ribosomal subunit"/>
    <property type="evidence" value="ECO:0007669"/>
    <property type="project" value="InterPro"/>
</dbReference>
<dbReference type="GO" id="GO:0019843">
    <property type="term" value="F:rRNA binding"/>
    <property type="evidence" value="ECO:0007669"/>
    <property type="project" value="UniProtKB-UniRule"/>
</dbReference>
<dbReference type="GO" id="GO:0003735">
    <property type="term" value="F:structural constituent of ribosome"/>
    <property type="evidence" value="ECO:0007669"/>
    <property type="project" value="InterPro"/>
</dbReference>
<dbReference type="GO" id="GO:0016740">
    <property type="term" value="F:transferase activity"/>
    <property type="evidence" value="ECO:0007669"/>
    <property type="project" value="InterPro"/>
</dbReference>
<dbReference type="GO" id="GO:0002181">
    <property type="term" value="P:cytoplasmic translation"/>
    <property type="evidence" value="ECO:0007669"/>
    <property type="project" value="TreeGrafter"/>
</dbReference>
<dbReference type="FunFam" id="2.30.30.30:FF:000001">
    <property type="entry name" value="50S ribosomal protein L2"/>
    <property type="match status" value="1"/>
</dbReference>
<dbReference type="FunFam" id="2.40.50.140:FF:000003">
    <property type="entry name" value="50S ribosomal protein L2"/>
    <property type="match status" value="1"/>
</dbReference>
<dbReference type="FunFam" id="4.10.950.10:FF:000001">
    <property type="entry name" value="50S ribosomal protein L2"/>
    <property type="match status" value="1"/>
</dbReference>
<dbReference type="Gene3D" id="2.30.30.30">
    <property type="match status" value="1"/>
</dbReference>
<dbReference type="Gene3D" id="2.40.50.140">
    <property type="entry name" value="Nucleic acid-binding proteins"/>
    <property type="match status" value="1"/>
</dbReference>
<dbReference type="Gene3D" id="4.10.950.10">
    <property type="entry name" value="Ribosomal protein L2, domain 3"/>
    <property type="match status" value="1"/>
</dbReference>
<dbReference type="HAMAP" id="MF_01320_B">
    <property type="entry name" value="Ribosomal_uL2_B"/>
    <property type="match status" value="1"/>
</dbReference>
<dbReference type="InterPro" id="IPR012340">
    <property type="entry name" value="NA-bd_OB-fold"/>
</dbReference>
<dbReference type="InterPro" id="IPR014722">
    <property type="entry name" value="Rib_uL2_dom2"/>
</dbReference>
<dbReference type="InterPro" id="IPR002171">
    <property type="entry name" value="Ribosomal_uL2"/>
</dbReference>
<dbReference type="InterPro" id="IPR005880">
    <property type="entry name" value="Ribosomal_uL2_bac/org-type"/>
</dbReference>
<dbReference type="InterPro" id="IPR022669">
    <property type="entry name" value="Ribosomal_uL2_C"/>
</dbReference>
<dbReference type="InterPro" id="IPR022671">
    <property type="entry name" value="Ribosomal_uL2_CS"/>
</dbReference>
<dbReference type="InterPro" id="IPR014726">
    <property type="entry name" value="Ribosomal_uL2_dom3"/>
</dbReference>
<dbReference type="InterPro" id="IPR022666">
    <property type="entry name" value="Ribosomal_uL2_RNA-bd_dom"/>
</dbReference>
<dbReference type="InterPro" id="IPR008991">
    <property type="entry name" value="Translation_prot_SH3-like_sf"/>
</dbReference>
<dbReference type="NCBIfam" id="TIGR01171">
    <property type="entry name" value="rplB_bact"/>
    <property type="match status" value="1"/>
</dbReference>
<dbReference type="PANTHER" id="PTHR13691:SF5">
    <property type="entry name" value="LARGE RIBOSOMAL SUBUNIT PROTEIN UL2M"/>
    <property type="match status" value="1"/>
</dbReference>
<dbReference type="PANTHER" id="PTHR13691">
    <property type="entry name" value="RIBOSOMAL PROTEIN L2"/>
    <property type="match status" value="1"/>
</dbReference>
<dbReference type="Pfam" id="PF00181">
    <property type="entry name" value="Ribosomal_L2"/>
    <property type="match status" value="1"/>
</dbReference>
<dbReference type="Pfam" id="PF03947">
    <property type="entry name" value="Ribosomal_L2_C"/>
    <property type="match status" value="1"/>
</dbReference>
<dbReference type="PIRSF" id="PIRSF002158">
    <property type="entry name" value="Ribosomal_L2"/>
    <property type="match status" value="1"/>
</dbReference>
<dbReference type="SMART" id="SM01383">
    <property type="entry name" value="Ribosomal_L2"/>
    <property type="match status" value="1"/>
</dbReference>
<dbReference type="SMART" id="SM01382">
    <property type="entry name" value="Ribosomal_L2_C"/>
    <property type="match status" value="1"/>
</dbReference>
<dbReference type="SUPFAM" id="SSF50249">
    <property type="entry name" value="Nucleic acid-binding proteins"/>
    <property type="match status" value="1"/>
</dbReference>
<dbReference type="SUPFAM" id="SSF50104">
    <property type="entry name" value="Translation proteins SH3-like domain"/>
    <property type="match status" value="1"/>
</dbReference>
<dbReference type="PROSITE" id="PS00467">
    <property type="entry name" value="RIBOSOMAL_L2"/>
    <property type="match status" value="1"/>
</dbReference>
<reference key="1">
    <citation type="journal article" date="2008" name="PLoS ONE">
        <title>Genome biology of Actinobacillus pleuropneumoniae JL03, an isolate of serotype 3 prevalent in China.</title>
        <authorList>
            <person name="Xu Z."/>
            <person name="Zhou Y."/>
            <person name="Li L."/>
            <person name="Zhou R."/>
            <person name="Xiao S."/>
            <person name="Wan Y."/>
            <person name="Zhang S."/>
            <person name="Wang K."/>
            <person name="Li W."/>
            <person name="Li L."/>
            <person name="Jin H."/>
            <person name="Kang M."/>
            <person name="Dalai B."/>
            <person name="Li T."/>
            <person name="Liu L."/>
            <person name="Cheng Y."/>
            <person name="Zhang L."/>
            <person name="Xu T."/>
            <person name="Zheng H."/>
            <person name="Pu S."/>
            <person name="Wang B."/>
            <person name="Gu W."/>
            <person name="Zhang X.L."/>
            <person name="Zhu G.-F."/>
            <person name="Wang S."/>
            <person name="Zhao G.-P."/>
            <person name="Chen H."/>
        </authorList>
    </citation>
    <scope>NUCLEOTIDE SEQUENCE [LARGE SCALE GENOMIC DNA]</scope>
    <source>
        <strain>JL03</strain>
    </source>
</reference>